<accession>Q88NC7</accession>
<keyword id="KW-0002">3D-structure</keyword>
<keyword id="KW-0016">Alginate biosynthesis</keyword>
<keyword id="KW-0998">Cell outer membrane</keyword>
<keyword id="KW-0449">Lipoprotein</keyword>
<keyword id="KW-0472">Membrane</keyword>
<keyword id="KW-0564">Palmitate</keyword>
<keyword id="KW-1185">Reference proteome</keyword>
<keyword id="KW-0732">Signal</keyword>
<organism>
    <name type="scientific">Pseudomonas putida (strain ATCC 47054 / DSM 6125 / CFBP 8728 / NCIMB 11950 / KT2440)</name>
    <dbReference type="NCBI Taxonomy" id="160488"/>
    <lineage>
        <taxon>Bacteria</taxon>
        <taxon>Pseudomonadati</taxon>
        <taxon>Pseudomonadota</taxon>
        <taxon>Gammaproteobacteria</taxon>
        <taxon>Pseudomonadales</taxon>
        <taxon>Pseudomonadaceae</taxon>
        <taxon>Pseudomonas</taxon>
    </lineage>
</organism>
<gene>
    <name type="primary">algK</name>
    <name type="ordered locus">PP_1285</name>
</gene>
<sequence length="484" mass="52459">MACEGRTMISDTYKVRVNLGLCALAAAITLAGCAGLPDQRLANEALKRGDTALAERNYKALADLGYSEAQVGLADIKVATRDPSQIKEAEATYRAAAATSPRAQARLGRLLVAKPDSTQAEREEAETLLKQAAKQGQSNTLIPLAMLYLSYPQSFPKVNAQQQIDQWRAAGNPEAGLAQVLLYRTQGTYDQHLGEVEKICKAALNTTDICYVELATVYQKRGQADQQAALLGQLKSAYARGAVPATRVDSVARVLADRSLGQTDEKTAKELLEQVAPANPASWVSLAQLVYDFPELGDTDQLMAYIDKGREAEQPRAELLLGRLYYEGKTLPADAQKAEQHLQAAAEAGEISAHYYLGQLYRRGYLGNVEPQKAVDHLLAAARGGQNSADYALAQLFSEGHGIRPQPGNAWVFAQLSQANPTPQSAELLQQLDQQLTPDQRNQAQQLLDQEKRARGSLAQGANSTLALEALQDDEKEVDGEDSL</sequence>
<evidence type="ECO:0000250" key="1"/>
<evidence type="ECO:0000255" key="2">
    <source>
        <dbReference type="PROSITE-ProRule" id="PRU00303"/>
    </source>
</evidence>
<evidence type="ECO:0000256" key="3">
    <source>
        <dbReference type="SAM" id="MobiDB-lite"/>
    </source>
</evidence>
<evidence type="ECO:0000305" key="4"/>
<evidence type="ECO:0007829" key="5">
    <source>
        <dbReference type="PDB" id="7ULA"/>
    </source>
</evidence>
<comment type="function">
    <text evidence="1">May be involved in the polymerization of mannuronate to alginate.</text>
</comment>
<comment type="pathway">
    <text>Glycan biosynthesis; alginate biosynthesis.</text>
</comment>
<comment type="subcellular location">
    <subcellularLocation>
        <location evidence="1">Cell outer membrane</location>
        <topology evidence="2">Lipid-anchor</topology>
        <orientation evidence="1">Periplasmic side</orientation>
    </subcellularLocation>
</comment>
<comment type="similarity">
    <text evidence="4">Belongs to the AlgK family.</text>
</comment>
<proteinExistence type="evidence at protein level"/>
<feature type="signal peptide" evidence="2">
    <location>
        <begin position="1"/>
        <end position="32"/>
    </location>
</feature>
<feature type="chain" id="PRO_0000020668" description="Alginate biosynthesis protein AlgK">
    <location>
        <begin position="33"/>
        <end position="484"/>
    </location>
</feature>
<feature type="region of interest" description="Disordered" evidence="3">
    <location>
        <begin position="447"/>
        <end position="484"/>
    </location>
</feature>
<feature type="compositionally biased region" description="Acidic residues" evidence="3">
    <location>
        <begin position="471"/>
        <end position="484"/>
    </location>
</feature>
<feature type="lipid moiety-binding region" description="N-palmitoyl cysteine" evidence="2">
    <location>
        <position position="33"/>
    </location>
</feature>
<feature type="lipid moiety-binding region" description="S-diacylglycerol cysteine" evidence="2">
    <location>
        <position position="33"/>
    </location>
</feature>
<feature type="helix" evidence="5">
    <location>
        <begin position="141"/>
        <end position="150"/>
    </location>
</feature>
<feature type="helix" evidence="5">
    <location>
        <begin position="160"/>
        <end position="169"/>
    </location>
</feature>
<feature type="helix" evidence="5">
    <location>
        <begin position="175"/>
        <end position="185"/>
    </location>
</feature>
<feature type="helix" evidence="5">
    <location>
        <begin position="189"/>
        <end position="191"/>
    </location>
</feature>
<feature type="helix" evidence="5">
    <location>
        <begin position="193"/>
        <end position="203"/>
    </location>
</feature>
<feature type="turn" evidence="5">
    <location>
        <begin position="204"/>
        <end position="206"/>
    </location>
</feature>
<feature type="helix" evidence="5">
    <location>
        <begin position="209"/>
        <end position="220"/>
    </location>
</feature>
<feature type="helix" evidence="5">
    <location>
        <begin position="224"/>
        <end position="239"/>
    </location>
</feature>
<feature type="helix" evidence="5">
    <location>
        <begin position="245"/>
        <end position="255"/>
    </location>
</feature>
<feature type="helix" evidence="5">
    <location>
        <begin position="258"/>
        <end position="260"/>
    </location>
</feature>
<feature type="helix" evidence="5">
    <location>
        <begin position="265"/>
        <end position="275"/>
    </location>
</feature>
<feature type="helix" evidence="5">
    <location>
        <begin position="276"/>
        <end position="278"/>
    </location>
</feature>
<feature type="helix" evidence="5">
    <location>
        <begin position="281"/>
        <end position="292"/>
    </location>
</feature>
<feature type="helix" evidence="5">
    <location>
        <begin position="294"/>
        <end position="296"/>
    </location>
</feature>
<feature type="helix" evidence="5">
    <location>
        <begin position="299"/>
        <end position="310"/>
    </location>
</feature>
<feature type="turn" evidence="5">
    <location>
        <begin position="311"/>
        <end position="313"/>
    </location>
</feature>
<feature type="helix" evidence="5">
    <location>
        <begin position="315"/>
        <end position="327"/>
    </location>
</feature>
<feature type="strand" evidence="5">
    <location>
        <begin position="329"/>
        <end position="331"/>
    </location>
</feature>
<feature type="helix" evidence="5">
    <location>
        <begin position="335"/>
        <end position="347"/>
    </location>
</feature>
<feature type="helix" evidence="5">
    <location>
        <begin position="352"/>
        <end position="363"/>
    </location>
</feature>
<feature type="turn" evidence="5">
    <location>
        <begin position="364"/>
        <end position="366"/>
    </location>
</feature>
<feature type="helix" evidence="5">
    <location>
        <begin position="371"/>
        <end position="383"/>
    </location>
</feature>
<feature type="helix" evidence="5">
    <location>
        <begin position="387"/>
        <end position="396"/>
    </location>
</feature>
<feature type="helix" evidence="5">
    <location>
        <begin position="407"/>
        <end position="417"/>
    </location>
</feature>
<feature type="helix" evidence="5">
    <location>
        <begin position="423"/>
        <end position="435"/>
    </location>
</feature>
<feature type="helix" evidence="5">
    <location>
        <begin position="438"/>
        <end position="452"/>
    </location>
</feature>
<reference key="1">
    <citation type="journal article" date="2002" name="Environ. Microbiol.">
        <title>Complete genome sequence and comparative analysis of the metabolically versatile Pseudomonas putida KT2440.</title>
        <authorList>
            <person name="Nelson K.E."/>
            <person name="Weinel C."/>
            <person name="Paulsen I.T."/>
            <person name="Dodson R.J."/>
            <person name="Hilbert H."/>
            <person name="Martins dos Santos V.A.P."/>
            <person name="Fouts D.E."/>
            <person name="Gill S.R."/>
            <person name="Pop M."/>
            <person name="Holmes M."/>
            <person name="Brinkac L.M."/>
            <person name="Beanan M.J."/>
            <person name="DeBoy R.T."/>
            <person name="Daugherty S.C."/>
            <person name="Kolonay J.F."/>
            <person name="Madupu R."/>
            <person name="Nelson W.C."/>
            <person name="White O."/>
            <person name="Peterson J.D."/>
            <person name="Khouri H.M."/>
            <person name="Hance I."/>
            <person name="Chris Lee P."/>
            <person name="Holtzapple E.K."/>
            <person name="Scanlan D."/>
            <person name="Tran K."/>
            <person name="Moazzez A."/>
            <person name="Utterback T.R."/>
            <person name="Rizzo M."/>
            <person name="Lee K."/>
            <person name="Kosack D."/>
            <person name="Moestl D."/>
            <person name="Wedler H."/>
            <person name="Lauber J."/>
            <person name="Stjepandic D."/>
            <person name="Hoheisel J."/>
            <person name="Straetz M."/>
            <person name="Heim S."/>
            <person name="Kiewitz C."/>
            <person name="Eisen J.A."/>
            <person name="Timmis K.N."/>
            <person name="Duesterhoeft A."/>
            <person name="Tuemmler B."/>
            <person name="Fraser C.M."/>
        </authorList>
    </citation>
    <scope>NUCLEOTIDE SEQUENCE [LARGE SCALE GENOMIC DNA]</scope>
    <source>
        <strain>ATCC 47054 / DSM 6125 / CFBP 8728 / NCIMB 11950 / KT2440</strain>
    </source>
</reference>
<name>ALGK_PSEPK</name>
<protein>
    <recommendedName>
        <fullName>Alginate biosynthesis protein AlgK</fullName>
    </recommendedName>
</protein>
<dbReference type="EMBL" id="AE015451">
    <property type="protein sequence ID" value="AAN66909.1"/>
    <property type="molecule type" value="Genomic_DNA"/>
</dbReference>
<dbReference type="RefSeq" id="NP_743445.1">
    <property type="nucleotide sequence ID" value="NC_002947.4"/>
</dbReference>
<dbReference type="PDB" id="7ULA">
    <property type="method" value="X-ray"/>
    <property type="resolution" value="2.46 A"/>
    <property type="chains" value="B=33-484"/>
</dbReference>
<dbReference type="PDBsum" id="7ULA"/>
<dbReference type="SMR" id="Q88NC7"/>
<dbReference type="STRING" id="160488.PP_1285"/>
<dbReference type="PaxDb" id="160488-PP_1285"/>
<dbReference type="KEGG" id="ppu:PP_1285"/>
<dbReference type="PATRIC" id="fig|160488.4.peg.1362"/>
<dbReference type="eggNOG" id="COG0790">
    <property type="taxonomic scope" value="Bacteria"/>
</dbReference>
<dbReference type="HOGENOM" id="CLU_595617_0_0_6"/>
<dbReference type="OrthoDB" id="6383809at2"/>
<dbReference type="PhylomeDB" id="Q88NC7"/>
<dbReference type="BioCyc" id="PPUT160488:G1G01-1372-MONOMER"/>
<dbReference type="UniPathway" id="UPA00286"/>
<dbReference type="Proteomes" id="UP000000556">
    <property type="component" value="Chromosome"/>
</dbReference>
<dbReference type="GO" id="GO:0009279">
    <property type="term" value="C:cell outer membrane"/>
    <property type="evidence" value="ECO:0007669"/>
    <property type="project" value="UniProtKB-SubCell"/>
</dbReference>
<dbReference type="GO" id="GO:0042121">
    <property type="term" value="P:alginic acid biosynthetic process"/>
    <property type="evidence" value="ECO:0007669"/>
    <property type="project" value="UniProtKB-UniPathway"/>
</dbReference>
<dbReference type="Gene3D" id="1.25.40.10">
    <property type="entry name" value="Tetratricopeptide repeat domain"/>
    <property type="match status" value="1"/>
</dbReference>
<dbReference type="InterPro" id="IPR053440">
    <property type="entry name" value="Alginate_biosynth_AlgK"/>
</dbReference>
<dbReference type="InterPro" id="IPR006597">
    <property type="entry name" value="Sel1-like"/>
</dbReference>
<dbReference type="InterPro" id="IPR050767">
    <property type="entry name" value="Sel1_AlgK"/>
</dbReference>
<dbReference type="InterPro" id="IPR011990">
    <property type="entry name" value="TPR-like_helical_dom_sf"/>
</dbReference>
<dbReference type="NCBIfam" id="NF038194">
    <property type="entry name" value="AlgK_TPR_lipo"/>
    <property type="match status" value="1"/>
</dbReference>
<dbReference type="PANTHER" id="PTHR11102:SF160">
    <property type="entry name" value="ERAD-ASSOCIATED E3 UBIQUITIN-PROTEIN LIGASE COMPONENT HRD3"/>
    <property type="match status" value="1"/>
</dbReference>
<dbReference type="PANTHER" id="PTHR11102">
    <property type="entry name" value="SEL-1-LIKE PROTEIN"/>
    <property type="match status" value="1"/>
</dbReference>
<dbReference type="Pfam" id="PF08238">
    <property type="entry name" value="Sel1"/>
    <property type="match status" value="4"/>
</dbReference>
<dbReference type="SMART" id="SM00671">
    <property type="entry name" value="SEL1"/>
    <property type="match status" value="4"/>
</dbReference>
<dbReference type="SUPFAM" id="SSF81901">
    <property type="entry name" value="HCP-like"/>
    <property type="match status" value="2"/>
</dbReference>
<dbReference type="PROSITE" id="PS51257">
    <property type="entry name" value="PROKAR_LIPOPROTEIN"/>
    <property type="match status" value="1"/>
</dbReference>